<feature type="chain" id="PRO_0000110455" description="Beta-ketoacyl-[acyl-carrier-protein] synthase III">
    <location>
        <begin position="1"/>
        <end position="330"/>
    </location>
</feature>
<feature type="region of interest" description="ACP-binding" evidence="1">
    <location>
        <begin position="250"/>
        <end position="254"/>
    </location>
</feature>
<feature type="active site" evidence="1">
    <location>
        <position position="111"/>
    </location>
</feature>
<feature type="active site" evidence="1">
    <location>
        <position position="249"/>
    </location>
</feature>
<feature type="active site" evidence="1">
    <location>
        <position position="279"/>
    </location>
</feature>
<feature type="strand" evidence="2">
    <location>
        <begin position="4"/>
        <end position="13"/>
    </location>
</feature>
<feature type="strand" evidence="2">
    <location>
        <begin position="18"/>
        <end position="20"/>
    </location>
</feature>
<feature type="helix" evidence="2">
    <location>
        <begin position="21"/>
        <end position="27"/>
    </location>
</feature>
<feature type="helix" evidence="2">
    <location>
        <begin position="32"/>
        <end position="39"/>
    </location>
</feature>
<feature type="strand" evidence="2">
    <location>
        <begin position="43"/>
        <end position="45"/>
    </location>
</feature>
<feature type="helix" evidence="2">
    <location>
        <begin position="52"/>
        <end position="67"/>
    </location>
</feature>
<feature type="strand" evidence="2">
    <location>
        <begin position="73"/>
        <end position="78"/>
    </location>
</feature>
<feature type="strand" evidence="2">
    <location>
        <begin position="83"/>
        <end position="87"/>
    </location>
</feature>
<feature type="helix" evidence="2">
    <location>
        <begin position="90"/>
        <end position="96"/>
    </location>
</feature>
<feature type="strand" evidence="2">
    <location>
        <begin position="102"/>
        <end position="108"/>
    </location>
</feature>
<feature type="helix" evidence="2">
    <location>
        <begin position="110"/>
        <end position="112"/>
    </location>
</feature>
<feature type="helix" evidence="2">
    <location>
        <begin position="113"/>
        <end position="126"/>
    </location>
</feature>
<feature type="strand" evidence="2">
    <location>
        <begin position="131"/>
        <end position="139"/>
    </location>
</feature>
<feature type="helix" evidence="2">
    <location>
        <begin position="141"/>
        <end position="144"/>
    </location>
</feature>
<feature type="helix" evidence="2">
    <location>
        <begin position="150"/>
        <end position="155"/>
    </location>
</feature>
<feature type="strand" evidence="2">
    <location>
        <begin position="159"/>
        <end position="168"/>
    </location>
</feature>
<feature type="strand" evidence="2">
    <location>
        <begin position="175"/>
        <end position="183"/>
    </location>
</feature>
<feature type="helix" evidence="2">
    <location>
        <begin position="185"/>
        <end position="187"/>
    </location>
</feature>
<feature type="strand" evidence="2">
    <location>
        <begin position="190"/>
        <end position="194"/>
    </location>
</feature>
<feature type="helix" evidence="2">
    <location>
        <begin position="198"/>
        <end position="203"/>
    </location>
</feature>
<feature type="helix" evidence="2">
    <location>
        <begin position="214"/>
        <end position="236"/>
    </location>
</feature>
<feature type="helix" evidence="2">
    <location>
        <begin position="240"/>
        <end position="242"/>
    </location>
</feature>
<feature type="strand" evidence="2">
    <location>
        <begin position="244"/>
        <end position="248"/>
    </location>
</feature>
<feature type="helix" evidence="2">
    <location>
        <begin position="253"/>
        <end position="263"/>
    </location>
</feature>
<feature type="helix" evidence="2">
    <location>
        <begin position="267"/>
        <end position="269"/>
    </location>
</feature>
<feature type="helix" evidence="2">
    <location>
        <begin position="274"/>
        <end position="277"/>
    </location>
</feature>
<feature type="helix" evidence="2">
    <location>
        <begin position="281"/>
        <end position="283"/>
    </location>
</feature>
<feature type="helix" evidence="2">
    <location>
        <begin position="284"/>
        <end position="294"/>
    </location>
</feature>
<feature type="strand" evidence="2">
    <location>
        <begin position="303"/>
        <end position="310"/>
    </location>
</feature>
<feature type="turn" evidence="2">
    <location>
        <begin position="311"/>
        <end position="313"/>
    </location>
</feature>
<feature type="strand" evidence="2">
    <location>
        <begin position="314"/>
        <end position="321"/>
    </location>
</feature>
<keyword id="KW-0002">3D-structure</keyword>
<keyword id="KW-0012">Acyltransferase</keyword>
<keyword id="KW-0963">Cytoplasm</keyword>
<keyword id="KW-0275">Fatty acid biosynthesis</keyword>
<keyword id="KW-0276">Fatty acid metabolism</keyword>
<keyword id="KW-0444">Lipid biosynthesis</keyword>
<keyword id="KW-0443">Lipid metabolism</keyword>
<keyword id="KW-0511">Multifunctional enzyme</keyword>
<keyword id="KW-1185">Reference proteome</keyword>
<keyword id="KW-0808">Transferase</keyword>
<protein>
    <recommendedName>
        <fullName evidence="1">Beta-ketoacyl-[acyl-carrier-protein] synthase III</fullName>
        <shortName evidence="1">Beta-ketoacyl-ACP synthase III</shortName>
        <shortName evidence="1">KAS III</shortName>
        <ecNumber evidence="1">2.3.1.180</ecNumber>
    </recommendedName>
    <alternativeName>
        <fullName evidence="1">3-oxoacyl-[acyl-carrier-protein] synthase 3</fullName>
    </alternativeName>
    <alternativeName>
        <fullName evidence="1">3-oxoacyl-[acyl-carrier-protein] synthase III</fullName>
    </alternativeName>
</protein>
<organism>
    <name type="scientific">Pseudomonas aeruginosa (strain ATCC 15692 / DSM 22644 / CIP 104116 / JCM 14847 / LMG 12228 / 1C / PRS 101 / PAO1)</name>
    <dbReference type="NCBI Taxonomy" id="208964"/>
    <lineage>
        <taxon>Bacteria</taxon>
        <taxon>Pseudomonadati</taxon>
        <taxon>Pseudomonadota</taxon>
        <taxon>Gammaproteobacteria</taxon>
        <taxon>Pseudomonadales</taxon>
        <taxon>Pseudomonadaceae</taxon>
        <taxon>Pseudomonas</taxon>
    </lineage>
</organism>
<dbReference type="EC" id="2.3.1.180" evidence="1"/>
<dbReference type="EMBL" id="AE004091">
    <property type="protein sequence ID" value="AAG06721.1"/>
    <property type="molecule type" value="Genomic_DNA"/>
</dbReference>
<dbReference type="PIR" id="A83230">
    <property type="entry name" value="A83230"/>
</dbReference>
<dbReference type="RefSeq" id="WP_003091712.1">
    <property type="nucleotide sequence ID" value="NZ_QZGE01000017.1"/>
</dbReference>
<dbReference type="PDB" id="2X3E">
    <property type="method" value="X-ray"/>
    <property type="resolution" value="1.81 A"/>
    <property type="chains" value="A/B=1-330"/>
</dbReference>
<dbReference type="PDBsum" id="2X3E"/>
<dbReference type="SMR" id="Q9HYR2"/>
<dbReference type="FunCoup" id="Q9HYR2">
    <property type="interactions" value="620"/>
</dbReference>
<dbReference type="STRING" id="208964.PA3333"/>
<dbReference type="PaxDb" id="208964-PA3333"/>
<dbReference type="KEGG" id="pae:PA3333"/>
<dbReference type="PATRIC" id="fig|208964.12.peg.3491"/>
<dbReference type="PseudoCAP" id="PA3333"/>
<dbReference type="HOGENOM" id="CLU_039592_4_0_6"/>
<dbReference type="InParanoid" id="Q9HYR2"/>
<dbReference type="OrthoDB" id="9815506at2"/>
<dbReference type="PhylomeDB" id="Q9HYR2"/>
<dbReference type="BioCyc" id="PAER208964:G1FZ6-3397-MONOMER"/>
<dbReference type="BRENDA" id="2.3.1.180">
    <property type="organism ID" value="5087"/>
</dbReference>
<dbReference type="UniPathway" id="UPA00094"/>
<dbReference type="EvolutionaryTrace" id="Q9HYR2"/>
<dbReference type="Proteomes" id="UP000002438">
    <property type="component" value="Chromosome"/>
</dbReference>
<dbReference type="GO" id="GO:0005737">
    <property type="term" value="C:cytoplasm"/>
    <property type="evidence" value="ECO:0007669"/>
    <property type="project" value="UniProtKB-SubCell"/>
</dbReference>
<dbReference type="GO" id="GO:0004315">
    <property type="term" value="F:3-oxoacyl-[acyl-carrier-protein] synthase activity"/>
    <property type="evidence" value="ECO:0007669"/>
    <property type="project" value="InterPro"/>
</dbReference>
<dbReference type="GO" id="GO:0033818">
    <property type="term" value="F:beta-ketoacyl-acyl-carrier-protein synthase III activity"/>
    <property type="evidence" value="ECO:0007669"/>
    <property type="project" value="UniProtKB-UniRule"/>
</dbReference>
<dbReference type="GO" id="GO:0006633">
    <property type="term" value="P:fatty acid biosynthetic process"/>
    <property type="evidence" value="ECO:0007669"/>
    <property type="project" value="UniProtKB-UniRule"/>
</dbReference>
<dbReference type="GO" id="GO:0044550">
    <property type="term" value="P:secondary metabolite biosynthetic process"/>
    <property type="evidence" value="ECO:0000318"/>
    <property type="project" value="GO_Central"/>
</dbReference>
<dbReference type="CDD" id="cd00830">
    <property type="entry name" value="KAS_III"/>
    <property type="match status" value="1"/>
</dbReference>
<dbReference type="Gene3D" id="3.40.47.10">
    <property type="match status" value="1"/>
</dbReference>
<dbReference type="HAMAP" id="MF_01815">
    <property type="entry name" value="FabH"/>
    <property type="match status" value="1"/>
</dbReference>
<dbReference type="InterPro" id="IPR013747">
    <property type="entry name" value="ACP_syn_III_C"/>
</dbReference>
<dbReference type="InterPro" id="IPR013751">
    <property type="entry name" value="ACP_syn_III_N"/>
</dbReference>
<dbReference type="InterPro" id="IPR004655">
    <property type="entry name" value="FabH"/>
</dbReference>
<dbReference type="InterPro" id="IPR016039">
    <property type="entry name" value="Thiolase-like"/>
</dbReference>
<dbReference type="NCBIfam" id="TIGR00747">
    <property type="entry name" value="fabH"/>
    <property type="match status" value="1"/>
</dbReference>
<dbReference type="NCBIfam" id="NF006829">
    <property type="entry name" value="PRK09352.1"/>
    <property type="match status" value="1"/>
</dbReference>
<dbReference type="PANTHER" id="PTHR34069">
    <property type="entry name" value="3-OXOACYL-[ACYL-CARRIER-PROTEIN] SYNTHASE 3"/>
    <property type="match status" value="1"/>
</dbReference>
<dbReference type="PANTHER" id="PTHR34069:SF2">
    <property type="entry name" value="BETA-KETOACYL-[ACYL-CARRIER-PROTEIN] SYNTHASE III"/>
    <property type="match status" value="1"/>
</dbReference>
<dbReference type="Pfam" id="PF08545">
    <property type="entry name" value="ACP_syn_III"/>
    <property type="match status" value="1"/>
</dbReference>
<dbReference type="Pfam" id="PF08541">
    <property type="entry name" value="ACP_syn_III_C"/>
    <property type="match status" value="1"/>
</dbReference>
<dbReference type="SUPFAM" id="SSF53901">
    <property type="entry name" value="Thiolase-like"/>
    <property type="match status" value="1"/>
</dbReference>
<gene>
    <name evidence="1" type="primary">fabH</name>
    <name type="ordered locus">PA3333</name>
</gene>
<evidence type="ECO:0000255" key="1">
    <source>
        <dbReference type="HAMAP-Rule" id="MF_01815"/>
    </source>
</evidence>
<evidence type="ECO:0007829" key="2">
    <source>
        <dbReference type="PDB" id="2X3E"/>
    </source>
</evidence>
<name>FABH_PSEAE</name>
<sequence length="330" mass="34004">MPRAAVVCGLGSYLPEAVLSNDMLAAELDTSDAWISSRTGVRQRHIAGDLGSGDLALRAASAALASAGLERVDAVVLATSTGDFCCPATAPRVAARLGLVGALAFDLSAACTGFVYGLASVGSLISAGLADSALLVGVDTFSHTLDPADRSTRALFGDGAGAVVLRAGDAEEEGALLAFDLGSDGHQFDLLMTPAVSRAERSSGQASNYFRMDGKAVFGQAVTQMSDSVRRVLDRVGWQASDLHHLVPHQANTRILAAVADQLDLPVERVVSNIAEVGNTVAASIPLALAHGLRQGILRDGGNMVLTGFGAGLTWGSVALRWPKIVPTMD</sequence>
<comment type="function">
    <text evidence="1">Catalyzes the condensation reaction of fatty acid synthesis by the addition to an acyl acceptor of two carbons from malonyl-ACP. Catalyzes the first condensation reaction which initiates fatty acid synthesis and may therefore play a role in governing the total rate of fatty acid production. Possesses both acetoacetyl-ACP synthase and acetyl transacylase activities. Its substrate specificity determines the biosynthesis of branched-chain and/or straight-chain of fatty acids.</text>
</comment>
<comment type="catalytic activity">
    <reaction evidence="1">
        <text>malonyl-[ACP] + acetyl-CoA + H(+) = 3-oxobutanoyl-[ACP] + CO2 + CoA</text>
        <dbReference type="Rhea" id="RHEA:12080"/>
        <dbReference type="Rhea" id="RHEA-COMP:9623"/>
        <dbReference type="Rhea" id="RHEA-COMP:9625"/>
        <dbReference type="ChEBI" id="CHEBI:15378"/>
        <dbReference type="ChEBI" id="CHEBI:16526"/>
        <dbReference type="ChEBI" id="CHEBI:57287"/>
        <dbReference type="ChEBI" id="CHEBI:57288"/>
        <dbReference type="ChEBI" id="CHEBI:78449"/>
        <dbReference type="ChEBI" id="CHEBI:78450"/>
        <dbReference type="EC" id="2.3.1.180"/>
    </reaction>
</comment>
<comment type="pathway">
    <text evidence="1">Lipid metabolism; fatty acid biosynthesis.</text>
</comment>
<comment type="subunit">
    <text evidence="1">Homodimer.</text>
</comment>
<comment type="subcellular location">
    <subcellularLocation>
        <location evidence="1">Cytoplasm</location>
    </subcellularLocation>
</comment>
<comment type="domain">
    <text evidence="1">The last Arg residue of the ACP-binding site is essential for the weak association between ACP/AcpP and FabH.</text>
</comment>
<comment type="similarity">
    <text evidence="1">Belongs to the thiolase-like superfamily. FabH family.</text>
</comment>
<reference key="1">
    <citation type="journal article" date="2000" name="Nature">
        <title>Complete genome sequence of Pseudomonas aeruginosa PAO1, an opportunistic pathogen.</title>
        <authorList>
            <person name="Stover C.K."/>
            <person name="Pham X.-Q.T."/>
            <person name="Erwin A.L."/>
            <person name="Mizoguchi S.D."/>
            <person name="Warrener P."/>
            <person name="Hickey M.J."/>
            <person name="Brinkman F.S.L."/>
            <person name="Hufnagle W.O."/>
            <person name="Kowalik D.J."/>
            <person name="Lagrou M."/>
            <person name="Garber R.L."/>
            <person name="Goltry L."/>
            <person name="Tolentino E."/>
            <person name="Westbrock-Wadman S."/>
            <person name="Yuan Y."/>
            <person name="Brody L.L."/>
            <person name="Coulter S.N."/>
            <person name="Folger K.R."/>
            <person name="Kas A."/>
            <person name="Larbig K."/>
            <person name="Lim R.M."/>
            <person name="Smith K.A."/>
            <person name="Spencer D.H."/>
            <person name="Wong G.K.-S."/>
            <person name="Wu Z."/>
            <person name="Paulsen I.T."/>
            <person name="Reizer J."/>
            <person name="Saier M.H. Jr."/>
            <person name="Hancock R.E.W."/>
            <person name="Lory S."/>
            <person name="Olson M.V."/>
        </authorList>
    </citation>
    <scope>NUCLEOTIDE SEQUENCE [LARGE SCALE GENOMIC DNA]</scope>
    <source>
        <strain>ATCC 15692 / DSM 22644 / CIP 104116 / JCM 14847 / LMG 12228 / 1C / PRS 101 / PAO1</strain>
    </source>
</reference>
<accession>Q9HYR2</accession>
<proteinExistence type="evidence at protein level"/>